<protein>
    <recommendedName>
        <fullName evidence="1">Proteasome subunit beta</fullName>
        <ecNumber evidence="1">3.4.25.1</ecNumber>
    </recommendedName>
    <alternativeName>
        <fullName evidence="1">20S proteasome beta subunit</fullName>
    </alternativeName>
    <alternativeName>
        <fullName evidence="1">Proteasome core protein PrcB</fullName>
    </alternativeName>
</protein>
<gene>
    <name evidence="1" type="primary">prcB</name>
    <name type="ordered locus">Xcel_1488</name>
</gene>
<feature type="propeptide" id="PRO_0000397600" description="Removed in mature form; by autocatalysis" evidence="1">
    <location>
        <begin position="1"/>
        <end position="47"/>
    </location>
</feature>
<feature type="chain" id="PRO_0000397601" description="Proteasome subunit beta">
    <location>
        <begin position="48"/>
        <end position="270"/>
    </location>
</feature>
<feature type="active site" description="Nucleophile" evidence="1">
    <location>
        <position position="48"/>
    </location>
</feature>
<organism>
    <name type="scientific">Xylanimonas cellulosilytica (strain DSM 15894 / JCM 12276 / CECT 5975 / KCTC 9989 / LMG 20990 / NBRC 107835 / XIL07)</name>
    <dbReference type="NCBI Taxonomy" id="446471"/>
    <lineage>
        <taxon>Bacteria</taxon>
        <taxon>Bacillati</taxon>
        <taxon>Actinomycetota</taxon>
        <taxon>Actinomycetes</taxon>
        <taxon>Micrococcales</taxon>
        <taxon>Promicromonosporaceae</taxon>
        <taxon>Xylanimonas</taxon>
    </lineage>
</organism>
<keyword id="KW-0068">Autocatalytic cleavage</keyword>
<keyword id="KW-0963">Cytoplasm</keyword>
<keyword id="KW-0378">Hydrolase</keyword>
<keyword id="KW-0645">Protease</keyword>
<keyword id="KW-0647">Proteasome</keyword>
<keyword id="KW-1185">Reference proteome</keyword>
<keyword id="KW-0888">Threonine protease</keyword>
<keyword id="KW-0865">Zymogen</keyword>
<reference key="1">
    <citation type="submission" date="2009-11" db="EMBL/GenBank/DDBJ databases">
        <title>The complete chromosome of Xylanimonas cellulosilytica DSM 15894.</title>
        <authorList>
            <consortium name="US DOE Joint Genome Institute (JGI-PGF)"/>
            <person name="Lucas S."/>
            <person name="Copeland A."/>
            <person name="Lapidus A."/>
            <person name="Glavina del Rio T."/>
            <person name="Dalin E."/>
            <person name="Tice H."/>
            <person name="Bruce D."/>
            <person name="Goodwin L."/>
            <person name="Pitluck S."/>
            <person name="Kyrpides N."/>
            <person name="Mavromatis K."/>
            <person name="Ivanova N."/>
            <person name="Mikhailova N."/>
            <person name="Foster B."/>
            <person name="Clum A."/>
            <person name="Brettin T."/>
            <person name="Detter J.C."/>
            <person name="Han C."/>
            <person name="Larimer F."/>
            <person name="Land M."/>
            <person name="Hauser L."/>
            <person name="Markowitz V."/>
            <person name="Cheng J.F."/>
            <person name="Hugenholtz P."/>
            <person name="Woyke T."/>
            <person name="Wu D."/>
            <person name="Gehrich-Schroeter G."/>
            <person name="Schneider S."/>
            <person name="Pukall S.R."/>
            <person name="Klenk H.P."/>
            <person name="Eisen J.A."/>
        </authorList>
    </citation>
    <scope>NUCLEOTIDE SEQUENCE [LARGE SCALE GENOMIC DNA]</scope>
    <source>
        <strain>DSM 15894 / JCM 12276 / CECT 5975 / KCTC 9989 / LMG 20990 / NBRC 107835 / XIL07</strain>
    </source>
</reference>
<sequence length="270" mass="28601">MSNRGRLGDAFLRPGSSSFLDFLSDHAPELLPGRSAAAGNAPLAPHATTIVALTFQDGVVMAGDRRATAGTMIASREIEKVFPADDYSVIGISGSAGIGVDLARLFQLELEHYEKIEGSLLSLDGKANRLGTLLRGNLPLAMQGFVVVPLFGGYDLDRGAGRIFSYDATGGRYEEHEHHGTGSGAIFARGALKKLWRPGMDAAEAVKVAVEALYDAADDDAATGGPDPVRRIWPVVTTVTAAGYRRVPEDELATLVDALLAVRTERGRLA</sequence>
<name>PSB_XYLCX</name>
<dbReference type="EC" id="3.4.25.1" evidence="1"/>
<dbReference type="EMBL" id="CP001821">
    <property type="protein sequence ID" value="ACZ30518.1"/>
    <property type="molecule type" value="Genomic_DNA"/>
</dbReference>
<dbReference type="RefSeq" id="WP_012878260.1">
    <property type="nucleotide sequence ID" value="NC_013530.1"/>
</dbReference>
<dbReference type="SMR" id="D1BS26"/>
<dbReference type="STRING" id="446471.Xcel_1488"/>
<dbReference type="MEROPS" id="T01.005"/>
<dbReference type="KEGG" id="xce:Xcel_1488"/>
<dbReference type="eggNOG" id="COG0638">
    <property type="taxonomic scope" value="Bacteria"/>
</dbReference>
<dbReference type="HOGENOM" id="CLU_035750_2_0_11"/>
<dbReference type="OrthoDB" id="5174038at2"/>
<dbReference type="UniPathway" id="UPA00997"/>
<dbReference type="Proteomes" id="UP000002255">
    <property type="component" value="Chromosome"/>
</dbReference>
<dbReference type="GO" id="GO:0005737">
    <property type="term" value="C:cytoplasm"/>
    <property type="evidence" value="ECO:0007669"/>
    <property type="project" value="UniProtKB-SubCell"/>
</dbReference>
<dbReference type="GO" id="GO:0019774">
    <property type="term" value="C:proteasome core complex, beta-subunit complex"/>
    <property type="evidence" value="ECO:0007669"/>
    <property type="project" value="UniProtKB-UniRule"/>
</dbReference>
<dbReference type="GO" id="GO:0004298">
    <property type="term" value="F:threonine-type endopeptidase activity"/>
    <property type="evidence" value="ECO:0007669"/>
    <property type="project" value="UniProtKB-UniRule"/>
</dbReference>
<dbReference type="GO" id="GO:0019941">
    <property type="term" value="P:modification-dependent protein catabolic process"/>
    <property type="evidence" value="ECO:0007669"/>
    <property type="project" value="UniProtKB-UniRule"/>
</dbReference>
<dbReference type="GO" id="GO:0010498">
    <property type="term" value="P:proteasomal protein catabolic process"/>
    <property type="evidence" value="ECO:0007669"/>
    <property type="project" value="UniProtKB-UniRule"/>
</dbReference>
<dbReference type="CDD" id="cd01906">
    <property type="entry name" value="proteasome_protease_HslV"/>
    <property type="match status" value="1"/>
</dbReference>
<dbReference type="Gene3D" id="3.60.20.10">
    <property type="entry name" value="Glutamine Phosphoribosylpyrophosphate, subunit 1, domain 1"/>
    <property type="match status" value="1"/>
</dbReference>
<dbReference type="HAMAP" id="MF_02113_B">
    <property type="entry name" value="Proteasome_B_B"/>
    <property type="match status" value="1"/>
</dbReference>
<dbReference type="InterPro" id="IPR029055">
    <property type="entry name" value="Ntn_hydrolases_N"/>
</dbReference>
<dbReference type="InterPro" id="IPR000243">
    <property type="entry name" value="Pept_T1A_subB"/>
</dbReference>
<dbReference type="InterPro" id="IPR001353">
    <property type="entry name" value="Proteasome_sua/b"/>
</dbReference>
<dbReference type="InterPro" id="IPR023333">
    <property type="entry name" value="Proteasome_suB-type"/>
</dbReference>
<dbReference type="InterPro" id="IPR022483">
    <property type="entry name" value="PSB_actinobac"/>
</dbReference>
<dbReference type="NCBIfam" id="TIGR03690">
    <property type="entry name" value="20S_bact_beta"/>
    <property type="match status" value="1"/>
</dbReference>
<dbReference type="PANTHER" id="PTHR32194:SF0">
    <property type="entry name" value="ATP-DEPENDENT PROTEASE SUBUNIT HSLV"/>
    <property type="match status" value="1"/>
</dbReference>
<dbReference type="PANTHER" id="PTHR32194">
    <property type="entry name" value="METALLOPROTEASE TLDD"/>
    <property type="match status" value="1"/>
</dbReference>
<dbReference type="Pfam" id="PF00227">
    <property type="entry name" value="Proteasome"/>
    <property type="match status" value="1"/>
</dbReference>
<dbReference type="PRINTS" id="PR00141">
    <property type="entry name" value="PROTEASOME"/>
</dbReference>
<dbReference type="SUPFAM" id="SSF56235">
    <property type="entry name" value="N-terminal nucleophile aminohydrolases (Ntn hydrolases)"/>
    <property type="match status" value="1"/>
</dbReference>
<dbReference type="PROSITE" id="PS51476">
    <property type="entry name" value="PROTEASOME_BETA_2"/>
    <property type="match status" value="1"/>
</dbReference>
<accession>D1BS26</accession>
<proteinExistence type="inferred from homology"/>
<evidence type="ECO:0000255" key="1">
    <source>
        <dbReference type="HAMAP-Rule" id="MF_02113"/>
    </source>
</evidence>
<comment type="function">
    <text evidence="1">Component of the proteasome core, a large protease complex with broad specificity involved in protein degradation.</text>
</comment>
<comment type="catalytic activity">
    <reaction evidence="1">
        <text>Cleavage of peptide bonds with very broad specificity.</text>
        <dbReference type="EC" id="3.4.25.1"/>
    </reaction>
</comment>
<comment type="activity regulation">
    <text evidence="1">The formation of the proteasomal ATPase ARC-20S proteasome complex, likely via the docking of the C-termini of ARC into the intersubunit pockets in the alpha-rings, may trigger opening of the gate for substrate entry. Interconversion between the open-gate and close-gate conformations leads to a dynamic regulation of the 20S proteasome proteolysis activity.</text>
</comment>
<comment type="pathway">
    <text evidence="1">Protein degradation; proteasomal Pup-dependent pathway.</text>
</comment>
<comment type="subunit">
    <text evidence="1">The 20S proteasome core is composed of 14 alpha and 14 beta subunits that assemble into four stacked heptameric rings, resulting in a barrel-shaped structure. The two inner rings, each composed of seven catalytic beta subunits, are sandwiched by two outer rings, each composed of seven alpha subunits. The catalytic chamber with the active sites is on the inside of the barrel. Has a gated structure, the ends of the cylinder being occluded by the N-termini of the alpha-subunits. Is capped by the proteasome-associated ATPase, ARC.</text>
</comment>
<comment type="subcellular location">
    <subcellularLocation>
        <location evidence="1">Cytoplasm</location>
    </subcellularLocation>
</comment>
<comment type="similarity">
    <text evidence="1">Belongs to the peptidase T1B family.</text>
</comment>